<proteinExistence type="inferred from homology"/>
<reference key="1">
    <citation type="submission" date="2006-05" db="EMBL/GenBank/DDBJ databases">
        <authorList>
            <consortium name="Genoscope"/>
        </authorList>
    </citation>
    <scope>NUCLEOTIDE SEQUENCE [LARGE SCALE GENOMIC DNA]</scope>
    <source>
        <strain>RCC307</strain>
    </source>
</reference>
<keyword id="KW-0030">Aminoacyl-tRNA synthetase</keyword>
<keyword id="KW-0067">ATP-binding</keyword>
<keyword id="KW-0963">Cytoplasm</keyword>
<keyword id="KW-0436">Ligase</keyword>
<keyword id="KW-0547">Nucleotide-binding</keyword>
<keyword id="KW-0648">Protein biosynthesis</keyword>
<keyword id="KW-1185">Reference proteome</keyword>
<gene>
    <name evidence="1" type="primary">proS</name>
    <name type="ordered locus">SynRCC307_0876</name>
</gene>
<protein>
    <recommendedName>
        <fullName evidence="1">Proline--tRNA ligase</fullName>
        <ecNumber evidence="1">6.1.1.15</ecNumber>
    </recommendedName>
    <alternativeName>
        <fullName evidence="1">Prolyl-tRNA synthetase</fullName>
        <shortName evidence="1">ProRS</shortName>
    </alternativeName>
</protein>
<comment type="function">
    <text evidence="1">Catalyzes the attachment of proline to tRNA(Pro) in a two-step reaction: proline is first activated by ATP to form Pro-AMP and then transferred to the acceptor end of tRNA(Pro). As ProRS can inadvertently accommodate and process non-cognate amino acids such as alanine and cysteine, to avoid such errors it has two additional distinct editing activities against alanine. One activity is designated as 'pretransfer' editing and involves the tRNA(Pro)-independent hydrolysis of activated Ala-AMP. The other activity is designated 'posttransfer' editing and involves deacylation of mischarged Ala-tRNA(Pro). The misacylated Cys-tRNA(Pro) is not edited by ProRS.</text>
</comment>
<comment type="catalytic activity">
    <reaction evidence="1">
        <text>tRNA(Pro) + L-proline + ATP = L-prolyl-tRNA(Pro) + AMP + diphosphate</text>
        <dbReference type="Rhea" id="RHEA:14305"/>
        <dbReference type="Rhea" id="RHEA-COMP:9700"/>
        <dbReference type="Rhea" id="RHEA-COMP:9702"/>
        <dbReference type="ChEBI" id="CHEBI:30616"/>
        <dbReference type="ChEBI" id="CHEBI:33019"/>
        <dbReference type="ChEBI" id="CHEBI:60039"/>
        <dbReference type="ChEBI" id="CHEBI:78442"/>
        <dbReference type="ChEBI" id="CHEBI:78532"/>
        <dbReference type="ChEBI" id="CHEBI:456215"/>
        <dbReference type="EC" id="6.1.1.15"/>
    </reaction>
</comment>
<comment type="subunit">
    <text evidence="1">Homodimer.</text>
</comment>
<comment type="subcellular location">
    <subcellularLocation>
        <location evidence="1">Cytoplasm</location>
    </subcellularLocation>
</comment>
<comment type="domain">
    <text evidence="1">Consists of three domains: the N-terminal catalytic domain, the editing domain and the C-terminal anticodon-binding domain.</text>
</comment>
<comment type="similarity">
    <text evidence="1">Belongs to the class-II aminoacyl-tRNA synthetase family. ProS type 1 subfamily.</text>
</comment>
<dbReference type="EC" id="6.1.1.15" evidence="1"/>
<dbReference type="EMBL" id="CT978603">
    <property type="protein sequence ID" value="CAK27779.1"/>
    <property type="molecule type" value="Genomic_DNA"/>
</dbReference>
<dbReference type="SMR" id="A5GSC0"/>
<dbReference type="STRING" id="316278.SynRCC307_0876"/>
<dbReference type="KEGG" id="syr:SynRCC307_0876"/>
<dbReference type="eggNOG" id="COG0442">
    <property type="taxonomic scope" value="Bacteria"/>
</dbReference>
<dbReference type="HOGENOM" id="CLU_016739_0_0_3"/>
<dbReference type="OrthoDB" id="9809052at2"/>
<dbReference type="Proteomes" id="UP000001115">
    <property type="component" value="Chromosome"/>
</dbReference>
<dbReference type="GO" id="GO:0005829">
    <property type="term" value="C:cytosol"/>
    <property type="evidence" value="ECO:0007669"/>
    <property type="project" value="TreeGrafter"/>
</dbReference>
<dbReference type="GO" id="GO:0002161">
    <property type="term" value="F:aminoacyl-tRNA deacylase activity"/>
    <property type="evidence" value="ECO:0007669"/>
    <property type="project" value="InterPro"/>
</dbReference>
<dbReference type="GO" id="GO:0005524">
    <property type="term" value="F:ATP binding"/>
    <property type="evidence" value="ECO:0007669"/>
    <property type="project" value="UniProtKB-UniRule"/>
</dbReference>
<dbReference type="GO" id="GO:0004827">
    <property type="term" value="F:proline-tRNA ligase activity"/>
    <property type="evidence" value="ECO:0007669"/>
    <property type="project" value="UniProtKB-UniRule"/>
</dbReference>
<dbReference type="GO" id="GO:0006433">
    <property type="term" value="P:prolyl-tRNA aminoacylation"/>
    <property type="evidence" value="ECO:0007669"/>
    <property type="project" value="UniProtKB-UniRule"/>
</dbReference>
<dbReference type="CDD" id="cd04334">
    <property type="entry name" value="ProRS-INS"/>
    <property type="match status" value="1"/>
</dbReference>
<dbReference type="CDD" id="cd00861">
    <property type="entry name" value="ProRS_anticodon_short"/>
    <property type="match status" value="1"/>
</dbReference>
<dbReference type="CDD" id="cd00779">
    <property type="entry name" value="ProRS_core_prok"/>
    <property type="match status" value="1"/>
</dbReference>
<dbReference type="Gene3D" id="3.40.50.800">
    <property type="entry name" value="Anticodon-binding domain"/>
    <property type="match status" value="1"/>
</dbReference>
<dbReference type="Gene3D" id="3.30.930.10">
    <property type="entry name" value="Bira Bifunctional Protein, Domain 2"/>
    <property type="match status" value="2"/>
</dbReference>
<dbReference type="HAMAP" id="MF_01569">
    <property type="entry name" value="Pro_tRNA_synth_type1"/>
    <property type="match status" value="1"/>
</dbReference>
<dbReference type="InterPro" id="IPR002314">
    <property type="entry name" value="aa-tRNA-synt_IIb"/>
</dbReference>
<dbReference type="InterPro" id="IPR006195">
    <property type="entry name" value="aa-tRNA-synth_II"/>
</dbReference>
<dbReference type="InterPro" id="IPR045864">
    <property type="entry name" value="aa-tRNA-synth_II/BPL/LPL"/>
</dbReference>
<dbReference type="InterPro" id="IPR004154">
    <property type="entry name" value="Anticodon-bd"/>
</dbReference>
<dbReference type="InterPro" id="IPR036621">
    <property type="entry name" value="Anticodon-bd_dom_sf"/>
</dbReference>
<dbReference type="InterPro" id="IPR002316">
    <property type="entry name" value="Pro-tRNA-ligase_IIa"/>
</dbReference>
<dbReference type="InterPro" id="IPR004500">
    <property type="entry name" value="Pro-tRNA-synth_IIa_bac-type"/>
</dbReference>
<dbReference type="InterPro" id="IPR023717">
    <property type="entry name" value="Pro-tRNA-Synthase_IIa_type1"/>
</dbReference>
<dbReference type="InterPro" id="IPR050062">
    <property type="entry name" value="Pro-tRNA_synthetase"/>
</dbReference>
<dbReference type="InterPro" id="IPR044140">
    <property type="entry name" value="ProRS_anticodon_short"/>
</dbReference>
<dbReference type="InterPro" id="IPR033730">
    <property type="entry name" value="ProRS_core_prok"/>
</dbReference>
<dbReference type="InterPro" id="IPR036754">
    <property type="entry name" value="YbaK/aa-tRNA-synt-asso_dom_sf"/>
</dbReference>
<dbReference type="NCBIfam" id="NF006625">
    <property type="entry name" value="PRK09194.1"/>
    <property type="match status" value="1"/>
</dbReference>
<dbReference type="NCBIfam" id="TIGR00409">
    <property type="entry name" value="proS_fam_II"/>
    <property type="match status" value="1"/>
</dbReference>
<dbReference type="PANTHER" id="PTHR42753">
    <property type="entry name" value="MITOCHONDRIAL RIBOSOME PROTEIN L39/PROLYL-TRNA LIGASE FAMILY MEMBER"/>
    <property type="match status" value="1"/>
</dbReference>
<dbReference type="PANTHER" id="PTHR42753:SF2">
    <property type="entry name" value="PROLINE--TRNA LIGASE"/>
    <property type="match status" value="1"/>
</dbReference>
<dbReference type="Pfam" id="PF03129">
    <property type="entry name" value="HGTP_anticodon"/>
    <property type="match status" value="1"/>
</dbReference>
<dbReference type="Pfam" id="PF00587">
    <property type="entry name" value="tRNA-synt_2b"/>
    <property type="match status" value="1"/>
</dbReference>
<dbReference type="PRINTS" id="PR01046">
    <property type="entry name" value="TRNASYNTHPRO"/>
</dbReference>
<dbReference type="SUPFAM" id="SSF52954">
    <property type="entry name" value="Class II aaRS ABD-related"/>
    <property type="match status" value="1"/>
</dbReference>
<dbReference type="SUPFAM" id="SSF55681">
    <property type="entry name" value="Class II aaRS and biotin synthetases"/>
    <property type="match status" value="1"/>
</dbReference>
<dbReference type="SUPFAM" id="SSF55826">
    <property type="entry name" value="YbaK/ProRS associated domain"/>
    <property type="match status" value="1"/>
</dbReference>
<dbReference type="PROSITE" id="PS50862">
    <property type="entry name" value="AA_TRNA_LIGASE_II"/>
    <property type="match status" value="1"/>
</dbReference>
<organism>
    <name type="scientific">Synechococcus sp. (strain RCC307)</name>
    <dbReference type="NCBI Taxonomy" id="316278"/>
    <lineage>
        <taxon>Bacteria</taxon>
        <taxon>Bacillati</taxon>
        <taxon>Cyanobacteriota</taxon>
        <taxon>Cyanophyceae</taxon>
        <taxon>Synechococcales</taxon>
        <taxon>Synechococcaceae</taxon>
        <taxon>Synechococcus</taxon>
    </lineage>
</organism>
<evidence type="ECO:0000255" key="1">
    <source>
        <dbReference type="HAMAP-Rule" id="MF_01569"/>
    </source>
</evidence>
<sequence>MRVSALLLVTLRDDPAEAEIPSHKLLLRGGYIRRVASGIYAYLPLMWRVLRKVSAIVRQEMDAAGALETLLPQLQPAELWQRSGRWSGYTAGEGIMFHLQDRQDRELGLGPTHEEVITALAADLLRSYRQLPVNLYQIQTKFRDEIRPRFGLMRGREFIMKDAYSFHASAEDLGRGYAAMDQAYRRIFSRCGLQVVAVQADSGAIGGSASQEFMVTAEAGEDLILSSADGSYAANQERAESLPAEPVPLQSATAAELDTPGQTSIDALVEAQGWHASQLVKVILLVARFEQGRQQPLLVSLRGDQQLNEVTLANWLNQQHGQAWGALLGIEPLEAKHLAAEKVPAFGYLGPDLSDAVLQGSKKLESSFLRLADPTALDLPLFICGANRFNAHRLAANWSEPGMASPQRVELRAALPGDRCCHDPSQQLQARRGIEVGHIFQLGLKYSEALGATFANEQGQDAPLWMGCYGIGVSRLAQAAVEQHHDSAGMVWPVPIAPFEVVIVIASSKEAQQVELAEDLYGQLQQAGVDVLLDDRNERAGVKFKDAELIGIPWRLVVGRGAVNGQVELVERCSGEKQEGPHQDLMAQLLQTLDQQRQGL</sequence>
<accession>A5GSC0</accession>
<name>SYP_SYNR3</name>
<feature type="chain" id="PRO_1000069168" description="Proline--tRNA ligase">
    <location>
        <begin position="1"/>
        <end position="600"/>
    </location>
</feature>